<evidence type="ECO:0000250" key="1"/>
<evidence type="ECO:0000250" key="2">
    <source>
        <dbReference type="UniProtKB" id="Q26443"/>
    </source>
</evidence>
<evidence type="ECO:0000255" key="3"/>
<evidence type="ECO:0000269" key="4">
    <source>
    </source>
</evidence>
<evidence type="ECO:0000305" key="5"/>
<evidence type="ECO:0000305" key="6">
    <source>
    </source>
</evidence>
<evidence type="ECO:0000312" key="7">
    <source>
        <dbReference type="EMBL" id="AAD31915.1"/>
    </source>
</evidence>
<sequence>MKLTCVVIVAVLFLTAWTFVTAAPHSSNALENLYLKAHHEMNNPEDSELNKRCYDSGTSCNTGNQCCSGWCIFVCL</sequence>
<reference key="1">
    <citation type="journal article" date="1999" name="Peptides">
        <title>Conopeptides from Conus striatus and Conus textile by cDNA cloning.</title>
        <authorList>
            <person name="Lu B.-S."/>
            <person name="Yu F."/>
            <person name="Zhao D."/>
            <person name="Huang P.-T."/>
            <person name="Huang C.-F."/>
        </authorList>
    </citation>
    <scope>NUCLEOTIDE SEQUENCE [MRNA]</scope>
    <source>
        <tissue>Venom duct</tissue>
    </source>
</reference>
<reference key="2">
    <citation type="journal article" date="2012" name="J. Proteome Res.">
        <title>Constrained de novo sequencing of conotoxins.</title>
        <authorList>
            <person name="Bhatia S."/>
            <person name="Kil Y.J."/>
            <person name="Ueberheide B."/>
            <person name="Chait B.T."/>
            <person name="Tayo L."/>
            <person name="Cruz L."/>
            <person name="Lu B."/>
            <person name="Yates J.R. III"/>
            <person name="Bern M."/>
        </authorList>
    </citation>
    <scope>IDENTIFICATION BY MASS SPECTROMETRY</scope>
    <scope>SUBCELLULAR LOCATION</scope>
    <source>
        <tissue>Venom</tissue>
    </source>
</reference>
<accession>Q9XZK9</accession>
<protein>
    <recommendedName>
        <fullName evidence="7">Omega-conotoxin-like TxO2</fullName>
    </recommendedName>
</protein>
<comment type="function">
    <text evidence="1">Omega-conotoxins act at presynaptic membranes, they bind and block voltage-gated calcium channels (Cav).</text>
</comment>
<comment type="subcellular location">
    <subcellularLocation>
        <location evidence="4">Secreted</location>
    </subcellularLocation>
</comment>
<comment type="tissue specificity">
    <text evidence="6">Expressed by the venom duct.</text>
</comment>
<comment type="domain">
    <text evidence="2">The presence of a 'disulfide through disulfide knot' structurally defines this protein as a knottin.</text>
</comment>
<comment type="domain">
    <text evidence="5">The cysteine framework is VI/VII (C-C-CC-C-C).</text>
</comment>
<comment type="similarity">
    <text evidence="5">Belongs to the conotoxin O1 superfamily.</text>
</comment>
<dbReference type="EMBL" id="AF146355">
    <property type="protein sequence ID" value="AAD31915.1"/>
    <property type="molecule type" value="mRNA"/>
</dbReference>
<dbReference type="ConoServer" id="869">
    <property type="toxin name" value="TxO2 precursor"/>
</dbReference>
<dbReference type="GO" id="GO:0005576">
    <property type="term" value="C:extracellular region"/>
    <property type="evidence" value="ECO:0007669"/>
    <property type="project" value="UniProtKB-SubCell"/>
</dbReference>
<dbReference type="GO" id="GO:0044231">
    <property type="term" value="C:host cell presynaptic membrane"/>
    <property type="evidence" value="ECO:0007669"/>
    <property type="project" value="UniProtKB-KW"/>
</dbReference>
<dbReference type="GO" id="GO:0005246">
    <property type="term" value="F:calcium channel regulator activity"/>
    <property type="evidence" value="ECO:0007669"/>
    <property type="project" value="UniProtKB-KW"/>
</dbReference>
<dbReference type="GO" id="GO:0008200">
    <property type="term" value="F:ion channel inhibitor activity"/>
    <property type="evidence" value="ECO:0007669"/>
    <property type="project" value="InterPro"/>
</dbReference>
<dbReference type="GO" id="GO:0090729">
    <property type="term" value="F:toxin activity"/>
    <property type="evidence" value="ECO:0007669"/>
    <property type="project" value="UniProtKB-KW"/>
</dbReference>
<dbReference type="InterPro" id="IPR004214">
    <property type="entry name" value="Conotoxin"/>
</dbReference>
<dbReference type="InterPro" id="IPR012321">
    <property type="entry name" value="Conotoxin_omega-typ_CS"/>
</dbReference>
<dbReference type="Pfam" id="PF02950">
    <property type="entry name" value="Conotoxin"/>
    <property type="match status" value="1"/>
</dbReference>
<dbReference type="PROSITE" id="PS60004">
    <property type="entry name" value="OMEGA_CONOTOXIN"/>
    <property type="match status" value="1"/>
</dbReference>
<proteinExistence type="evidence at protein level"/>
<keyword id="KW-0108">Calcium channel impairing toxin</keyword>
<keyword id="KW-0165">Cleavage on pair of basic residues</keyword>
<keyword id="KW-1015">Disulfide bond</keyword>
<keyword id="KW-0872">Ion channel impairing toxin</keyword>
<keyword id="KW-0960">Knottin</keyword>
<keyword id="KW-0528">Neurotoxin</keyword>
<keyword id="KW-0638">Presynaptic neurotoxin</keyword>
<keyword id="KW-0964">Secreted</keyword>
<keyword id="KW-0732">Signal</keyword>
<keyword id="KW-0800">Toxin</keyword>
<keyword id="KW-1218">Voltage-gated calcium channel impairing toxin</keyword>
<feature type="signal peptide" evidence="3">
    <location>
        <begin position="1"/>
        <end position="22"/>
    </location>
</feature>
<feature type="propeptide" id="PRO_0000034952" evidence="1">
    <location>
        <begin position="23"/>
        <end position="52"/>
    </location>
</feature>
<feature type="peptide" id="PRO_0000034953" description="Omega-conotoxin-like TxO2" evidence="4">
    <location>
        <begin position="53"/>
        <end position="76"/>
    </location>
</feature>
<feature type="disulfide bond" evidence="2">
    <location>
        <begin position="53"/>
        <end position="67"/>
    </location>
</feature>
<feature type="disulfide bond" evidence="2">
    <location>
        <begin position="60"/>
        <end position="71"/>
    </location>
</feature>
<feature type="disulfide bond" evidence="2">
    <location>
        <begin position="66"/>
        <end position="75"/>
    </location>
</feature>
<name>O16O2_CONTE</name>
<organism>
    <name type="scientific">Conus textile</name>
    <name type="common">Cloth-of-gold cone</name>
    <dbReference type="NCBI Taxonomy" id="6494"/>
    <lineage>
        <taxon>Eukaryota</taxon>
        <taxon>Metazoa</taxon>
        <taxon>Spiralia</taxon>
        <taxon>Lophotrochozoa</taxon>
        <taxon>Mollusca</taxon>
        <taxon>Gastropoda</taxon>
        <taxon>Caenogastropoda</taxon>
        <taxon>Neogastropoda</taxon>
        <taxon>Conoidea</taxon>
        <taxon>Conidae</taxon>
        <taxon>Conus</taxon>
        <taxon>Cylinder</taxon>
    </lineage>
</organism>